<dbReference type="EC" id="1.3.1.9" evidence="1"/>
<dbReference type="EMBL" id="AE008923">
    <property type="protein sequence ID" value="AAM35033.1"/>
    <property type="molecule type" value="Genomic_DNA"/>
</dbReference>
<dbReference type="RefSeq" id="WP_011050119.1">
    <property type="nucleotide sequence ID" value="NC_003919.1"/>
</dbReference>
<dbReference type="SMR" id="Q8PR25"/>
<dbReference type="KEGG" id="xac:XAC0141"/>
<dbReference type="eggNOG" id="COG3007">
    <property type="taxonomic scope" value="Bacteria"/>
</dbReference>
<dbReference type="HOGENOM" id="CLU_057698_1_0_6"/>
<dbReference type="UniPathway" id="UPA00094"/>
<dbReference type="Proteomes" id="UP000000576">
    <property type="component" value="Chromosome"/>
</dbReference>
<dbReference type="GO" id="GO:0004318">
    <property type="term" value="F:enoyl-[acyl-carrier-protein] reductase (NADH) activity"/>
    <property type="evidence" value="ECO:0007669"/>
    <property type="project" value="UniProtKB-UniRule"/>
</dbReference>
<dbReference type="GO" id="GO:0051287">
    <property type="term" value="F:NAD binding"/>
    <property type="evidence" value="ECO:0007669"/>
    <property type="project" value="UniProtKB-UniRule"/>
</dbReference>
<dbReference type="GO" id="GO:0050343">
    <property type="term" value="F:trans-2-enoyl-CoA reductase (NADH) activity"/>
    <property type="evidence" value="ECO:0007669"/>
    <property type="project" value="TreeGrafter"/>
</dbReference>
<dbReference type="GO" id="GO:0006633">
    <property type="term" value="P:fatty acid biosynthetic process"/>
    <property type="evidence" value="ECO:0007669"/>
    <property type="project" value="UniProtKB-UniRule"/>
</dbReference>
<dbReference type="FunFam" id="3.40.50.720:FF:000221">
    <property type="entry name" value="Enoyl-[acyl-carrier-protein] reductase [NADH]"/>
    <property type="match status" value="1"/>
</dbReference>
<dbReference type="Gene3D" id="3.40.50.720">
    <property type="entry name" value="NAD(P)-binding Rossmann-like Domain"/>
    <property type="match status" value="1"/>
</dbReference>
<dbReference type="HAMAP" id="MF_01838">
    <property type="entry name" value="FabV_reductase"/>
    <property type="match status" value="1"/>
</dbReference>
<dbReference type="InterPro" id="IPR024906">
    <property type="entry name" value="Eno_Rdtase_FAD-bd_dom"/>
</dbReference>
<dbReference type="InterPro" id="IPR024910">
    <property type="entry name" value="Enoyl-CoA_Rdtase_cat_dom"/>
</dbReference>
<dbReference type="InterPro" id="IPR050048">
    <property type="entry name" value="FabV-like_NADH_b"/>
</dbReference>
<dbReference type="InterPro" id="IPR010758">
    <property type="entry name" value="Trans-2-enoyl-CoA_reductase"/>
</dbReference>
<dbReference type="NCBIfam" id="NF043048">
    <property type="entry name" value="EnoyACPredFabV"/>
    <property type="match status" value="1"/>
</dbReference>
<dbReference type="NCBIfam" id="NF010177">
    <property type="entry name" value="PRK13656.1"/>
    <property type="match status" value="1"/>
</dbReference>
<dbReference type="PANTHER" id="PTHR37480">
    <property type="entry name" value="ENOYL-[ACYL-CARRIER-PROTEIN] REDUCTASE [NADH]"/>
    <property type="match status" value="1"/>
</dbReference>
<dbReference type="PANTHER" id="PTHR37480:SF1">
    <property type="entry name" value="ENOYL-[ACYL-CARRIER-PROTEIN] REDUCTASE [NADH]"/>
    <property type="match status" value="1"/>
</dbReference>
<dbReference type="Pfam" id="PF07055">
    <property type="entry name" value="Eno-Rase_FAD_bd"/>
    <property type="match status" value="1"/>
</dbReference>
<dbReference type="Pfam" id="PF12242">
    <property type="entry name" value="Eno-Rase_NADH_b"/>
    <property type="match status" value="1"/>
</dbReference>
<dbReference type="Pfam" id="PF12241">
    <property type="entry name" value="Enoyl_reductase"/>
    <property type="match status" value="1"/>
</dbReference>
<proteinExistence type="inferred from homology"/>
<name>FABV_XANAC</name>
<reference key="1">
    <citation type="journal article" date="2002" name="Nature">
        <title>Comparison of the genomes of two Xanthomonas pathogens with differing host specificities.</title>
        <authorList>
            <person name="da Silva A.C.R."/>
            <person name="Ferro J.A."/>
            <person name="Reinach F.C."/>
            <person name="Farah C.S."/>
            <person name="Furlan L.R."/>
            <person name="Quaggio R.B."/>
            <person name="Monteiro-Vitorello C.B."/>
            <person name="Van Sluys M.A."/>
            <person name="Almeida N.F. Jr."/>
            <person name="Alves L.M.C."/>
            <person name="do Amaral A.M."/>
            <person name="Bertolini M.C."/>
            <person name="Camargo L.E.A."/>
            <person name="Camarotte G."/>
            <person name="Cannavan F."/>
            <person name="Cardozo J."/>
            <person name="Chambergo F."/>
            <person name="Ciapina L.P."/>
            <person name="Cicarelli R.M.B."/>
            <person name="Coutinho L.L."/>
            <person name="Cursino-Santos J.R."/>
            <person name="El-Dorry H."/>
            <person name="Faria J.B."/>
            <person name="Ferreira A.J.S."/>
            <person name="Ferreira R.C.C."/>
            <person name="Ferro M.I.T."/>
            <person name="Formighieri E.F."/>
            <person name="Franco M.C."/>
            <person name="Greggio C.C."/>
            <person name="Gruber A."/>
            <person name="Katsuyama A.M."/>
            <person name="Kishi L.T."/>
            <person name="Leite R.P."/>
            <person name="Lemos E.G.M."/>
            <person name="Lemos M.V.F."/>
            <person name="Locali E.C."/>
            <person name="Machado M.A."/>
            <person name="Madeira A.M.B.N."/>
            <person name="Martinez-Rossi N.M."/>
            <person name="Martins E.C."/>
            <person name="Meidanis J."/>
            <person name="Menck C.F.M."/>
            <person name="Miyaki C.Y."/>
            <person name="Moon D.H."/>
            <person name="Moreira L.M."/>
            <person name="Novo M.T.M."/>
            <person name="Okura V.K."/>
            <person name="Oliveira M.C."/>
            <person name="Oliveira V.R."/>
            <person name="Pereira H.A."/>
            <person name="Rossi A."/>
            <person name="Sena J.A.D."/>
            <person name="Silva C."/>
            <person name="de Souza R.F."/>
            <person name="Spinola L.A.F."/>
            <person name="Takita M.A."/>
            <person name="Tamura R.E."/>
            <person name="Teixeira E.C."/>
            <person name="Tezza R.I.D."/>
            <person name="Trindade dos Santos M."/>
            <person name="Truffi D."/>
            <person name="Tsai S.M."/>
            <person name="White F.F."/>
            <person name="Setubal J.C."/>
            <person name="Kitajima J.P."/>
        </authorList>
    </citation>
    <scope>NUCLEOTIDE SEQUENCE [LARGE SCALE GENOMIC DNA]</scope>
    <source>
        <strain>306</strain>
    </source>
</reference>
<protein>
    <recommendedName>
        <fullName evidence="1">Enoyl-[acyl-carrier-protein] reductase [NADH]</fullName>
        <shortName evidence="1">ENR</shortName>
        <ecNumber evidence="1">1.3.1.9</ecNumber>
    </recommendedName>
</protein>
<accession>Q8PR25</accession>
<evidence type="ECO:0000255" key="1">
    <source>
        <dbReference type="HAMAP-Rule" id="MF_01838"/>
    </source>
</evidence>
<comment type="function">
    <text evidence="1">Involved in the final reduction of the elongation cycle of fatty acid synthesis (FAS II). Catalyzes the reduction of a carbon-carbon double bond in an enoyl moiety that is covalently linked to an acyl carrier protein (ACP).</text>
</comment>
<comment type="catalytic activity">
    <reaction evidence="1">
        <text>a 2,3-saturated acyl-[ACP] + NAD(+) = a (2E)-enoyl-[ACP] + NADH + H(+)</text>
        <dbReference type="Rhea" id="RHEA:10240"/>
        <dbReference type="Rhea" id="RHEA-COMP:9925"/>
        <dbReference type="Rhea" id="RHEA-COMP:9926"/>
        <dbReference type="ChEBI" id="CHEBI:15378"/>
        <dbReference type="ChEBI" id="CHEBI:57540"/>
        <dbReference type="ChEBI" id="CHEBI:57945"/>
        <dbReference type="ChEBI" id="CHEBI:78784"/>
        <dbReference type="ChEBI" id="CHEBI:78785"/>
        <dbReference type="EC" id="1.3.1.9"/>
    </reaction>
</comment>
<comment type="pathway">
    <text evidence="1">Lipid metabolism; fatty acid biosynthesis.</text>
</comment>
<comment type="subunit">
    <text evidence="1">Monomer.</text>
</comment>
<comment type="similarity">
    <text evidence="1">Belongs to the TER reductase family.</text>
</comment>
<organism>
    <name type="scientific">Xanthomonas axonopodis pv. citri (strain 306)</name>
    <dbReference type="NCBI Taxonomy" id="190486"/>
    <lineage>
        <taxon>Bacteria</taxon>
        <taxon>Pseudomonadati</taxon>
        <taxon>Pseudomonadota</taxon>
        <taxon>Gammaproteobacteria</taxon>
        <taxon>Lysobacterales</taxon>
        <taxon>Lysobacteraceae</taxon>
        <taxon>Xanthomonas</taxon>
    </lineage>
</organism>
<sequence length="402" mass="43849">MIIHPKVRGFICTTTHPLGCERNVLEQIAATRARGVRTDGPKKVLVIGASSGYGLASRITAAFGFGADTLGVFFEKPGTASKAGTAGWYNSAAFDKHAKAAGLYSKSINGDAFSDAAREKVIELIKTEMGGQVDLMVYSLASPVRKLPGSGEVKRSALKPIGQTYTATAIDTNKDTIIQASIEPASAQEIEDTVTVMGGQDWELWIDALEGAGVLADGARSVAFSYIGTEITWPIYWHGALGKAKVDLDHTAQRLNARLARRGGGANVAVLKSVVTQASAAIPVMPLYISMVYKIMKEKGLHEGTIEQLDRLFRERLYREDGQPAQVDDENRLRLDDWELRDDVQDACKALWPQVTTENLFELTDYAGYKHEFLKLFGFERTDVDYDADVATDVSFDCIELG</sequence>
<feature type="chain" id="PRO_0000220059" description="Enoyl-[acyl-carrier-protein] reductase [NADH]">
    <location>
        <begin position="1"/>
        <end position="402"/>
    </location>
</feature>
<feature type="active site" description="Proton donor" evidence="1">
    <location>
        <position position="236"/>
    </location>
</feature>
<feature type="binding site" evidence="1">
    <location>
        <begin position="48"/>
        <end position="53"/>
    </location>
    <ligand>
        <name>NAD(+)</name>
        <dbReference type="ChEBI" id="CHEBI:57540"/>
    </ligand>
</feature>
<feature type="binding site" evidence="1">
    <location>
        <begin position="74"/>
        <end position="75"/>
    </location>
    <ligand>
        <name>NAD(+)</name>
        <dbReference type="ChEBI" id="CHEBI:57540"/>
    </ligand>
</feature>
<feature type="binding site" evidence="1">
    <location>
        <begin position="111"/>
        <end position="112"/>
    </location>
    <ligand>
        <name>NAD(+)</name>
        <dbReference type="ChEBI" id="CHEBI:57540"/>
    </ligand>
</feature>
<feature type="binding site" evidence="1">
    <location>
        <begin position="140"/>
        <end position="141"/>
    </location>
    <ligand>
        <name>NAD(+)</name>
        <dbReference type="ChEBI" id="CHEBI:57540"/>
    </ligand>
</feature>
<feature type="binding site" evidence="1">
    <location>
        <position position="226"/>
    </location>
    <ligand>
        <name>substrate</name>
    </ligand>
</feature>
<feature type="binding site" evidence="1">
    <location>
        <position position="245"/>
    </location>
    <ligand>
        <name>NAD(+)</name>
        <dbReference type="ChEBI" id="CHEBI:57540"/>
    </ligand>
</feature>
<feature type="binding site" evidence="1">
    <location>
        <begin position="274"/>
        <end position="276"/>
    </location>
    <ligand>
        <name>NAD(+)</name>
        <dbReference type="ChEBI" id="CHEBI:57540"/>
    </ligand>
</feature>
<feature type="site" description="Plays an important role in discriminating NADH against NADPH" evidence="1">
    <location>
        <position position="75"/>
    </location>
</feature>
<gene>
    <name evidence="1" type="primary">fabV</name>
    <name type="ordered locus">XAC0141</name>
</gene>
<keyword id="KW-0275">Fatty acid biosynthesis</keyword>
<keyword id="KW-0276">Fatty acid metabolism</keyword>
<keyword id="KW-0444">Lipid biosynthesis</keyword>
<keyword id="KW-0443">Lipid metabolism</keyword>
<keyword id="KW-0520">NAD</keyword>
<keyword id="KW-0560">Oxidoreductase</keyword>